<proteinExistence type="inferred from homology"/>
<comment type="function">
    <text evidence="1">One of the primary rRNA binding proteins, this protein initially binds near the 5'-end of the 23S rRNA. It is important during the early stages of 50S assembly. It makes multiple contacts with different domains of the 23S rRNA in the assembled 50S subunit and ribosome.</text>
</comment>
<comment type="function">
    <text evidence="1">Forms part of the polypeptide exit tunnel.</text>
</comment>
<comment type="subunit">
    <text evidence="1">Part of the 50S ribosomal subunit.</text>
</comment>
<comment type="similarity">
    <text evidence="1">Belongs to the universal ribosomal protein uL4 family.</text>
</comment>
<dbReference type="EMBL" id="AE017226">
    <property type="protein sequence ID" value="AAS11259.1"/>
    <property type="molecule type" value="Genomic_DNA"/>
</dbReference>
<dbReference type="RefSeq" id="NP_971378.1">
    <property type="nucleotide sequence ID" value="NC_002967.9"/>
</dbReference>
<dbReference type="RefSeq" id="WP_002669996.1">
    <property type="nucleotide sequence ID" value="NC_002967.9"/>
</dbReference>
<dbReference type="SMR" id="P61070"/>
<dbReference type="STRING" id="243275.TDE_0768"/>
<dbReference type="PaxDb" id="243275-TDE_0768"/>
<dbReference type="GeneID" id="2740308"/>
<dbReference type="KEGG" id="tde:TDE_0768"/>
<dbReference type="PATRIC" id="fig|243275.7.peg.741"/>
<dbReference type="eggNOG" id="COG0088">
    <property type="taxonomic scope" value="Bacteria"/>
</dbReference>
<dbReference type="HOGENOM" id="CLU_041575_5_2_12"/>
<dbReference type="OrthoDB" id="9803201at2"/>
<dbReference type="Proteomes" id="UP000008212">
    <property type="component" value="Chromosome"/>
</dbReference>
<dbReference type="GO" id="GO:1990904">
    <property type="term" value="C:ribonucleoprotein complex"/>
    <property type="evidence" value="ECO:0007669"/>
    <property type="project" value="UniProtKB-KW"/>
</dbReference>
<dbReference type="GO" id="GO:0005840">
    <property type="term" value="C:ribosome"/>
    <property type="evidence" value="ECO:0007669"/>
    <property type="project" value="UniProtKB-KW"/>
</dbReference>
<dbReference type="GO" id="GO:0019843">
    <property type="term" value="F:rRNA binding"/>
    <property type="evidence" value="ECO:0007669"/>
    <property type="project" value="UniProtKB-UniRule"/>
</dbReference>
<dbReference type="GO" id="GO:0003735">
    <property type="term" value="F:structural constituent of ribosome"/>
    <property type="evidence" value="ECO:0007669"/>
    <property type="project" value="InterPro"/>
</dbReference>
<dbReference type="GO" id="GO:0006412">
    <property type="term" value="P:translation"/>
    <property type="evidence" value="ECO:0007669"/>
    <property type="project" value="UniProtKB-UniRule"/>
</dbReference>
<dbReference type="Gene3D" id="3.40.1370.10">
    <property type="match status" value="1"/>
</dbReference>
<dbReference type="HAMAP" id="MF_01328_B">
    <property type="entry name" value="Ribosomal_uL4_B"/>
    <property type="match status" value="1"/>
</dbReference>
<dbReference type="InterPro" id="IPR002136">
    <property type="entry name" value="Ribosomal_uL4"/>
</dbReference>
<dbReference type="InterPro" id="IPR013005">
    <property type="entry name" value="Ribosomal_uL4-like"/>
</dbReference>
<dbReference type="InterPro" id="IPR023574">
    <property type="entry name" value="Ribosomal_uL4_dom_sf"/>
</dbReference>
<dbReference type="NCBIfam" id="TIGR03953">
    <property type="entry name" value="rplD_bact"/>
    <property type="match status" value="1"/>
</dbReference>
<dbReference type="PANTHER" id="PTHR10746">
    <property type="entry name" value="50S RIBOSOMAL PROTEIN L4"/>
    <property type="match status" value="1"/>
</dbReference>
<dbReference type="PANTHER" id="PTHR10746:SF6">
    <property type="entry name" value="LARGE RIBOSOMAL SUBUNIT PROTEIN UL4M"/>
    <property type="match status" value="1"/>
</dbReference>
<dbReference type="Pfam" id="PF00573">
    <property type="entry name" value="Ribosomal_L4"/>
    <property type="match status" value="1"/>
</dbReference>
<dbReference type="SUPFAM" id="SSF52166">
    <property type="entry name" value="Ribosomal protein L4"/>
    <property type="match status" value="1"/>
</dbReference>
<name>RL4_TREDE</name>
<gene>
    <name evidence="1" type="primary">rplD</name>
    <name type="ordered locus">TDE_0768</name>
</gene>
<evidence type="ECO:0000255" key="1">
    <source>
        <dbReference type="HAMAP-Rule" id="MF_01328"/>
    </source>
</evidence>
<evidence type="ECO:0000256" key="2">
    <source>
        <dbReference type="SAM" id="MobiDB-lite"/>
    </source>
</evidence>
<evidence type="ECO:0000305" key="3"/>
<sequence length="211" mass="23571">MEKKVYSVDGKELRTINLDDKVFGLPVNDDVIYYAINNELANKRVGTACTKGRAEVHGSNSKPYSQKGTGRARRGDKKSPLLVGGGTIFGPKPRDFSYSMPKKAKRLAMKSILSLKAQNDRLVVVEDFTVESGKTRDLVKILDNFAKGERAVIILKDDDSLVKRAGRNIPHLSFLAYNRLRAHDLFYGRKVIMLESAAKNLSEFYGCKEAE</sequence>
<protein>
    <recommendedName>
        <fullName evidence="1">Large ribosomal subunit protein uL4</fullName>
    </recommendedName>
    <alternativeName>
        <fullName evidence="3">50S ribosomal protein L4</fullName>
    </alternativeName>
</protein>
<accession>P61070</accession>
<organism>
    <name type="scientific">Treponema denticola (strain ATCC 35405 / DSM 14222 / CIP 103919 / JCM 8153 / KCTC 15104)</name>
    <dbReference type="NCBI Taxonomy" id="243275"/>
    <lineage>
        <taxon>Bacteria</taxon>
        <taxon>Pseudomonadati</taxon>
        <taxon>Spirochaetota</taxon>
        <taxon>Spirochaetia</taxon>
        <taxon>Spirochaetales</taxon>
        <taxon>Treponemataceae</taxon>
        <taxon>Treponema</taxon>
    </lineage>
</organism>
<reference key="1">
    <citation type="journal article" date="2004" name="Proc. Natl. Acad. Sci. U.S.A.">
        <title>Comparison of the genome of the oral pathogen Treponema denticola with other spirochete genomes.</title>
        <authorList>
            <person name="Seshadri R."/>
            <person name="Myers G.S.A."/>
            <person name="Tettelin H."/>
            <person name="Eisen J.A."/>
            <person name="Heidelberg J.F."/>
            <person name="Dodson R.J."/>
            <person name="Davidsen T.M."/>
            <person name="DeBoy R.T."/>
            <person name="Fouts D.E."/>
            <person name="Haft D.H."/>
            <person name="Selengut J."/>
            <person name="Ren Q."/>
            <person name="Brinkac L.M."/>
            <person name="Madupu R."/>
            <person name="Kolonay J.F."/>
            <person name="Durkin S.A."/>
            <person name="Daugherty S.C."/>
            <person name="Shetty J."/>
            <person name="Shvartsbeyn A."/>
            <person name="Gebregeorgis E."/>
            <person name="Geer K."/>
            <person name="Tsegaye G."/>
            <person name="Malek J.A."/>
            <person name="Ayodeji B."/>
            <person name="Shatsman S."/>
            <person name="McLeod M.P."/>
            <person name="Smajs D."/>
            <person name="Howell J.K."/>
            <person name="Pal S."/>
            <person name="Amin A."/>
            <person name="Vashisth P."/>
            <person name="McNeill T.Z."/>
            <person name="Xiang Q."/>
            <person name="Sodergren E."/>
            <person name="Baca E."/>
            <person name="Weinstock G.M."/>
            <person name="Norris S.J."/>
            <person name="Fraser C.M."/>
            <person name="Paulsen I.T."/>
        </authorList>
    </citation>
    <scope>NUCLEOTIDE SEQUENCE [LARGE SCALE GENOMIC DNA]</scope>
    <source>
        <strain>ATCC 35405 / DSM 14222 / CIP 103919 / JCM 8153 / KCTC 15104</strain>
    </source>
</reference>
<feature type="chain" id="PRO_0000129303" description="Large ribosomal subunit protein uL4">
    <location>
        <begin position="1"/>
        <end position="211"/>
    </location>
</feature>
<feature type="region of interest" description="Disordered" evidence="2">
    <location>
        <begin position="52"/>
        <end position="79"/>
    </location>
</feature>
<feature type="compositionally biased region" description="Polar residues" evidence="2">
    <location>
        <begin position="58"/>
        <end position="68"/>
    </location>
</feature>
<keyword id="KW-1185">Reference proteome</keyword>
<keyword id="KW-0687">Ribonucleoprotein</keyword>
<keyword id="KW-0689">Ribosomal protein</keyword>
<keyword id="KW-0694">RNA-binding</keyword>
<keyword id="KW-0699">rRNA-binding</keyword>